<keyword id="KW-0997">Cell inner membrane</keyword>
<keyword id="KW-1003">Cell membrane</keyword>
<keyword id="KW-0472">Membrane</keyword>
<keyword id="KW-0812">Transmembrane</keyword>
<keyword id="KW-1133">Transmembrane helix</keyword>
<gene>
    <name type="ordered locus">mma_0129</name>
</gene>
<evidence type="ECO:0000255" key="1">
    <source>
        <dbReference type="HAMAP-Rule" id="MF_00010"/>
    </source>
</evidence>
<accession>A6SU72</accession>
<protein>
    <recommendedName>
        <fullName evidence="1">UPF0060 membrane protein mma_0129</fullName>
    </recommendedName>
</protein>
<sequence>MFEIKTVALFVLTAIAEIVGCYLPYLWLRQGASIWLLVPAALALGIFVWLLSLHPEAAGRVYAAYGGAYVAVALAWLWVVDGIKPTNWDFVGVAVTLAGMGIILFAPRA</sequence>
<comment type="subcellular location">
    <subcellularLocation>
        <location evidence="1">Cell inner membrane</location>
        <topology evidence="1">Multi-pass membrane protein</topology>
    </subcellularLocation>
</comment>
<comment type="similarity">
    <text evidence="1">Belongs to the UPF0060 family.</text>
</comment>
<dbReference type="EMBL" id="CP000269">
    <property type="protein sequence ID" value="ABR90307.1"/>
    <property type="molecule type" value="Genomic_DNA"/>
</dbReference>
<dbReference type="RefSeq" id="WP_011979355.1">
    <property type="nucleotide sequence ID" value="NC_009659.1"/>
</dbReference>
<dbReference type="SMR" id="A6SU72"/>
<dbReference type="KEGG" id="mms:mma_0129"/>
<dbReference type="eggNOG" id="COG1742">
    <property type="taxonomic scope" value="Bacteria"/>
</dbReference>
<dbReference type="HOGENOM" id="CLU_117653_2_0_4"/>
<dbReference type="OrthoDB" id="123240at2"/>
<dbReference type="Proteomes" id="UP000006388">
    <property type="component" value="Chromosome"/>
</dbReference>
<dbReference type="GO" id="GO:0005886">
    <property type="term" value="C:plasma membrane"/>
    <property type="evidence" value="ECO:0007669"/>
    <property type="project" value="UniProtKB-SubCell"/>
</dbReference>
<dbReference type="HAMAP" id="MF_00010">
    <property type="entry name" value="UPF0060"/>
    <property type="match status" value="1"/>
</dbReference>
<dbReference type="InterPro" id="IPR003844">
    <property type="entry name" value="UPF0060"/>
</dbReference>
<dbReference type="NCBIfam" id="NF002586">
    <property type="entry name" value="PRK02237.1"/>
    <property type="match status" value="1"/>
</dbReference>
<dbReference type="PANTHER" id="PTHR36116">
    <property type="entry name" value="UPF0060 MEMBRANE PROTEIN YNFA"/>
    <property type="match status" value="1"/>
</dbReference>
<dbReference type="PANTHER" id="PTHR36116:SF1">
    <property type="entry name" value="UPF0060 MEMBRANE PROTEIN YNFA"/>
    <property type="match status" value="1"/>
</dbReference>
<dbReference type="Pfam" id="PF02694">
    <property type="entry name" value="UPF0060"/>
    <property type="match status" value="1"/>
</dbReference>
<reference key="1">
    <citation type="journal article" date="2007" name="PLoS Genet.">
        <title>Genome analysis of Minibacterium massiliensis highlights the convergent evolution of water-living bacteria.</title>
        <authorList>
            <person name="Audic S."/>
            <person name="Robert C."/>
            <person name="Campagna B."/>
            <person name="Parinello H."/>
            <person name="Claverie J.-M."/>
            <person name="Raoult D."/>
            <person name="Drancourt M."/>
        </authorList>
    </citation>
    <scope>NUCLEOTIDE SEQUENCE [LARGE SCALE GENOMIC DNA]</scope>
    <source>
        <strain>Marseille</strain>
    </source>
</reference>
<feature type="chain" id="PRO_1000000761" description="UPF0060 membrane protein mma_0129">
    <location>
        <begin position="1"/>
        <end position="109"/>
    </location>
</feature>
<feature type="transmembrane region" description="Helical" evidence="1">
    <location>
        <begin position="7"/>
        <end position="27"/>
    </location>
</feature>
<feature type="transmembrane region" description="Helical" evidence="1">
    <location>
        <begin position="31"/>
        <end position="51"/>
    </location>
</feature>
<feature type="transmembrane region" description="Helical" evidence="1">
    <location>
        <begin position="63"/>
        <end position="83"/>
    </location>
</feature>
<feature type="transmembrane region" description="Helical" evidence="1">
    <location>
        <begin position="87"/>
        <end position="107"/>
    </location>
</feature>
<organism>
    <name type="scientific">Janthinobacterium sp. (strain Marseille)</name>
    <name type="common">Minibacterium massiliensis</name>
    <dbReference type="NCBI Taxonomy" id="375286"/>
    <lineage>
        <taxon>Bacteria</taxon>
        <taxon>Pseudomonadati</taxon>
        <taxon>Pseudomonadota</taxon>
        <taxon>Betaproteobacteria</taxon>
        <taxon>Burkholderiales</taxon>
        <taxon>Oxalobacteraceae</taxon>
        <taxon>Janthinobacterium</taxon>
    </lineage>
</organism>
<name>Y129_JANMA</name>
<proteinExistence type="inferred from homology"/>